<protein>
    <recommendedName>
        <fullName>Glycoprotein</fullName>
    </recommendedName>
    <alternativeName>
        <fullName>Spike glycoprotein</fullName>
    </alternativeName>
</protein>
<dbReference type="EMBL" id="M16023">
    <property type="protein sequence ID" value="AAB59926.1"/>
    <property type="molecule type" value="Genomic_RNA"/>
</dbReference>
<dbReference type="PIR" id="A29532">
    <property type="entry name" value="VGVNFR"/>
</dbReference>
<dbReference type="SMR" id="P07923"/>
<dbReference type="GlyCosmos" id="P07923">
    <property type="glycosylation" value="4 sites, No reported glycans"/>
</dbReference>
<dbReference type="GO" id="GO:0016020">
    <property type="term" value="C:membrane"/>
    <property type="evidence" value="ECO:0007669"/>
    <property type="project" value="UniProtKB-KW"/>
</dbReference>
<dbReference type="GO" id="GO:0019031">
    <property type="term" value="C:viral envelope"/>
    <property type="evidence" value="ECO:0007669"/>
    <property type="project" value="UniProtKB-KW"/>
</dbReference>
<dbReference type="GO" id="GO:0055036">
    <property type="term" value="C:virion membrane"/>
    <property type="evidence" value="ECO:0007669"/>
    <property type="project" value="UniProtKB-SubCell"/>
</dbReference>
<dbReference type="GO" id="GO:0046718">
    <property type="term" value="P:symbiont entry into host cell"/>
    <property type="evidence" value="ECO:0007669"/>
    <property type="project" value="UniProtKB-KW"/>
</dbReference>
<dbReference type="GO" id="GO:0019062">
    <property type="term" value="P:virion attachment to host cell"/>
    <property type="evidence" value="ECO:0007669"/>
    <property type="project" value="UniProtKB-KW"/>
</dbReference>
<dbReference type="InterPro" id="IPR055447">
    <property type="entry name" value="Rhabdo_glycop_CD"/>
</dbReference>
<dbReference type="InterPro" id="IPR001903">
    <property type="entry name" value="Rhabdo_glycop_FD"/>
</dbReference>
<dbReference type="InterPro" id="IPR002417">
    <property type="entry name" value="Spike_prot"/>
</dbReference>
<dbReference type="Pfam" id="PF24833">
    <property type="entry name" value="Rhabdo_glycop_CD"/>
    <property type="match status" value="1"/>
</dbReference>
<dbReference type="Pfam" id="PF00974">
    <property type="entry name" value="Rhabdo_glycop_FD"/>
    <property type="match status" value="1"/>
</dbReference>
<dbReference type="PRINTS" id="PR00796">
    <property type="entry name" value="SPIKEPROTEIN"/>
</dbReference>
<dbReference type="SUPFAM" id="SSF161008">
    <property type="entry name" value="Viral glycoprotein ectodomain-like"/>
    <property type="match status" value="1"/>
</dbReference>
<evidence type="ECO:0000250" key="1"/>
<evidence type="ECO:0000255" key="2"/>
<evidence type="ECO:0000305" key="3"/>
<feature type="signal peptide">
    <location>
        <begin position="1"/>
        <end position="20"/>
    </location>
</feature>
<feature type="chain" id="PRO_0000040991" description="Glycoprotein">
    <location>
        <begin position="21"/>
        <end position="508"/>
    </location>
</feature>
<feature type="topological domain" description="Virion surface" evidence="2">
    <location>
        <begin position="21"/>
        <end position="461"/>
    </location>
</feature>
<feature type="transmembrane region" description="Helical" evidence="2">
    <location>
        <begin position="462"/>
        <end position="482"/>
    </location>
</feature>
<feature type="topological domain" description="Intravirion" evidence="2">
    <location>
        <begin position="483"/>
        <end position="508"/>
    </location>
</feature>
<feature type="glycosylation site" description="N-linked (GlcNAc...) asparagine; by host" evidence="2">
    <location>
        <position position="56"/>
    </location>
</feature>
<feature type="glycosylation site" description="N-linked (GlcNAc...) asparagine; by host" evidence="2">
    <location>
        <position position="400"/>
    </location>
</feature>
<feature type="glycosylation site" description="N-linked (GlcNAc...) asparagine; by host" evidence="2">
    <location>
        <position position="401"/>
    </location>
</feature>
<feature type="glycosylation site" description="N-linked (GlcNAc...) asparagine; by host" evidence="2">
    <location>
        <position position="438"/>
    </location>
</feature>
<reference key="1">
    <citation type="journal article" date="1987" name="J. Virol.">
        <title>Nucleotide sequence of a cDNA clone carrying the glycoprotein gene of infectious hematopoietic necrosis virus, a fish rhabdovirus.</title>
        <authorList>
            <person name="Koener J.F."/>
            <person name="Passavant C.W."/>
            <person name="Kurath G."/>
            <person name="Leong J.-A."/>
        </authorList>
    </citation>
    <scope>NUCLEOTIDE SEQUENCE [GENOMIC RNA]</scope>
</reference>
<reference key="2">
    <citation type="submission" date="1995-10" db="EMBL/GenBank/DDBJ databases">
        <authorList>
            <person name="Leong J.-A."/>
        </authorList>
    </citation>
    <scope>SEQUENCE REVISION</scope>
</reference>
<organismHost>
    <name type="scientific">Salmo</name>
    <dbReference type="NCBI Taxonomy" id="8028"/>
</organismHost>
<accession>P07923</accession>
<organism>
    <name type="scientific">Infectious hematopoietic necrosis virus (strain Round Butte)</name>
    <name type="common">IHNV</name>
    <dbReference type="NCBI Taxonomy" id="11291"/>
    <lineage>
        <taxon>Viruses</taxon>
        <taxon>Riboviria</taxon>
        <taxon>Orthornavirae</taxon>
        <taxon>Negarnaviricota</taxon>
        <taxon>Haploviricotina</taxon>
        <taxon>Monjiviricetes</taxon>
        <taxon>Mononegavirales</taxon>
        <taxon>Rhabdoviridae</taxon>
        <taxon>Gammarhabdovirinae</taxon>
        <taxon>Novirhabdovirus</taxon>
        <taxon>Novirhabdovirus salmonid</taxon>
    </lineage>
</organism>
<name>GLYCO_IHNVR</name>
<keyword id="KW-0325">Glycoprotein</keyword>
<keyword id="KW-0945">Host-virus interaction</keyword>
<keyword id="KW-0472">Membrane</keyword>
<keyword id="KW-0732">Signal</keyword>
<keyword id="KW-0812">Transmembrane</keyword>
<keyword id="KW-1133">Transmembrane helix</keyword>
<keyword id="KW-1161">Viral attachment to host cell</keyword>
<keyword id="KW-0261">Viral envelope protein</keyword>
<keyword id="KW-0946">Virion</keyword>
<keyword id="KW-1160">Virus entry into host cell</keyword>
<sequence length="508" mass="56800">MDTMITTPLILILITCGANSQTVKPDTASESDQPTWSNPLFTYPEGCTLDKLSKVNASQLRCPRIFDDENRGLIAYPTSIRSLSVGNDLGEIHTQGNHIHKVLYRTICSTGFFGGQTIEKALVEMKLSTKEAGAYDTTTAAALYFPAPRCQWYTDNVQNDLIFYYTTQKSVLRDPYTRDFLDSDFIGGKCTKSPCQTHWSNVVWMGDAGIPACDSSQEIKAHLFVDKISNRVVKATSYGHHPWGLHRACMIEFCGKQWIRTDLGDLISVEYNSGAEILSFPKCEDKTMGMRGNLDDFAYLDDLVKASESREECLEAHAEIISTNSVTPYLLSKFRSPHPGINDVYAMHKGSIYHGMCMTVAVDEVSKDRTTYRAHRATSFTKWERPFGDEWEGFHGLHGNNTTIIPDLEKYVAQYKTSMMEPMSIKSVPHPSILAFYNETDLSGISIRKLDSFDLQSLHWSFWPTISALGGIPLVLLLAVAACCCWSGRPPTPSAPQSIPMYHLANRS</sequence>
<comment type="function">
    <text evidence="1">Binds to specific receptor at cellular surface, bringing about the attachment of the virus particle to the cell. Plays a major role in the determination of host range restriction and virulence. Class I viral fusion protein. Responsible for penetration of the viral nucleocapsid into the cell cytoplasm by mediating the fusion of the membrane of the endocytosed virus particle with the endosomal membrane. Low pH in endosomes induce an irreversible conformational change in G, releasing a fusion hydrophobic peptide (By similarity).</text>
</comment>
<comment type="subunit">
    <text evidence="1">Homotrimer.</text>
</comment>
<comment type="subcellular location">
    <subcellularLocation>
        <location evidence="1">Virion membrane</location>
        <topology evidence="1">Single-pass type I membrane protein</topology>
    </subcellularLocation>
</comment>
<comment type="similarity">
    <text evidence="3">Belongs to the novirhabdovirus glycoprotein family.</text>
</comment>
<proteinExistence type="inferred from homology"/>
<gene>
    <name type="primary">G</name>
</gene>